<name>H2A1_HUMAN</name>
<sequence>MSGRGKQGGKARAKAKTRSSRAGLQFPVGRVHRLLRKGNYAERVGAGAPVYLAAVLEYLTAEILELAGNAARDNKKTRIIPRHLQLAIRNDEELNKLLGKVTIAQGGVLPNIQAVLLPKKTESHHKAKGK</sequence>
<feature type="initiator methionine" description="Removed" evidence="2">
    <location>
        <position position="1"/>
    </location>
</feature>
<feature type="chain" id="PRO_0000055235" description="Histone H2A type 1">
    <location>
        <begin position="2"/>
        <end position="130"/>
    </location>
</feature>
<feature type="region of interest" description="Disordered" evidence="4">
    <location>
        <begin position="1"/>
        <end position="22"/>
    </location>
</feature>
<feature type="compositionally biased region" description="Basic residues" evidence="4">
    <location>
        <begin position="7"/>
        <end position="19"/>
    </location>
</feature>
<feature type="modified residue" description="N-acetylserine" evidence="5 9 11">
    <location>
        <position position="2"/>
    </location>
</feature>
<feature type="modified residue" description="Phosphoserine; by RPS6KA5" evidence="5 6">
    <location>
        <position position="2"/>
    </location>
</feature>
<feature type="modified residue" description="Citrulline; alternate" evidence="9">
    <location>
        <position position="4"/>
    </location>
</feature>
<feature type="modified residue" description="Symmetric dimethylarginine; by PRMT5; alternate" evidence="3">
    <location>
        <position position="4"/>
    </location>
</feature>
<feature type="modified residue" description="N6-(2-hydroxyisobutyryl)lysine" evidence="23">
    <location>
        <position position="6"/>
    </location>
</feature>
<feature type="modified residue" description="N6-(2-hydroxyisobutyryl)lysine; alternate" evidence="23">
    <location>
        <position position="10"/>
    </location>
</feature>
<feature type="modified residue" description="N6-(beta-hydroxybutyryl)lysine; alternate" evidence="26">
    <location>
        <position position="10"/>
    </location>
</feature>
<feature type="modified residue" description="N6-lactoyllysine; alternate" evidence="1">
    <location>
        <position position="10"/>
    </location>
</feature>
<feature type="modified residue" description="N6-succinyllysine; alternate" evidence="18">
    <location>
        <position position="10"/>
    </location>
</feature>
<feature type="modified residue" description="N6-(beta-hydroxybutyryl)lysine; alternate" evidence="26">
    <location>
        <position position="14"/>
    </location>
</feature>
<feature type="modified residue" description="N6-(2-hydroxyisobutyryl)lysine; alternate" evidence="23">
    <location>
        <position position="37"/>
    </location>
</feature>
<feature type="modified residue" description="N6-(beta-hydroxybutyryl)lysine; alternate" evidence="26">
    <location>
        <position position="37"/>
    </location>
</feature>
<feature type="modified residue" description="N6-crotonyllysine; alternate" evidence="17">
    <location>
        <position position="37"/>
    </location>
</feature>
<feature type="modified residue" description="N6-(2-hydroxyisobutyryl)lysine" evidence="23">
    <location>
        <position position="75"/>
    </location>
</feature>
<feature type="modified residue" description="N6-(2-hydroxyisobutyryl)lysine" evidence="23">
    <location>
        <position position="76"/>
    </location>
</feature>
<feature type="modified residue" description="N6-(2-hydroxyisobutyryl)lysine; alternate" evidence="23">
    <location>
        <position position="96"/>
    </location>
</feature>
<feature type="modified residue" description="N6-(beta-hydroxybutyryl)lysine; alternate" evidence="26">
    <location>
        <position position="96"/>
    </location>
</feature>
<feature type="modified residue" description="N6-glutaryllysine; alternate" evidence="27">
    <location>
        <position position="96"/>
    </location>
</feature>
<feature type="modified residue" description="N6-succinyllysine; alternate" evidence="18">
    <location>
        <position position="96"/>
    </location>
</feature>
<feature type="modified residue" description="N6-glutaryllysine" evidence="27">
    <location>
        <position position="100"/>
    </location>
</feature>
<feature type="modified residue" description="N5-methylglutamine" evidence="22">
    <location>
        <position position="105"/>
    </location>
</feature>
<feature type="modified residue" description="N6-(2-hydroxyisobutyryl)lysine; alternate" evidence="23">
    <location>
        <position position="119"/>
    </location>
</feature>
<feature type="modified residue" description="N6-(beta-hydroxybutyryl)lysine; alternate" evidence="26">
    <location>
        <position position="119"/>
    </location>
</feature>
<feature type="modified residue" description="N6-crotonyllysine; alternate" evidence="17">
    <location>
        <position position="119"/>
    </location>
</feature>
<feature type="modified residue" description="N6-glutaryllysine; alternate" evidence="27">
    <location>
        <position position="119"/>
    </location>
</feature>
<feature type="modified residue" description="N6-crotonyllysine; alternate" evidence="17">
    <location>
        <position position="120"/>
    </location>
</feature>
<feature type="modified residue" description="N6-glutaryllysine; alternate" evidence="27">
    <location>
        <position position="120"/>
    </location>
</feature>
<feature type="modified residue" description="Phosphothreonine; by DCAF1" evidence="7 21">
    <location>
        <position position="121"/>
    </location>
</feature>
<feature type="modified residue" description="N6-crotonyllysine; alternate" evidence="17">
    <location>
        <position position="126"/>
    </location>
</feature>
<feature type="modified residue" description="N6-glutaryllysine; alternate" evidence="27">
    <location>
        <position position="126"/>
    </location>
</feature>
<feature type="cross-link" description="Glycyl lysine isopeptide (Lys-Gly) (interchain with G-Cter in ubiquitin); alternate" evidence="19 20">
    <location>
        <position position="14"/>
    </location>
</feature>
<feature type="cross-link" description="Glycyl lysine isopeptide (Lys-Gly) (interchain with G-Cter in ubiquitin)" evidence="19 20">
    <location>
        <position position="16"/>
    </location>
</feature>
<feature type="cross-link" description="Glycyl lysine isopeptide (Lys-Gly) (interchain with G-Cter in ubiquitin); alternate" evidence="8 10 12 24">
    <location>
        <position position="120"/>
    </location>
</feature>
<feature type="mutagenesis site" description="Blocks the inhibition of transcription by RPS6KA5/MSK1." evidence="6">
    <original>S</original>
    <variation>A</variation>
    <location>
        <position position="2"/>
    </location>
</feature>
<feature type="mutagenesis site" description="No effect on interaction with VRK1." evidence="28">
    <original>E</original>
    <variation>A</variation>
    <location>
        <position position="57"/>
    </location>
</feature>
<feature type="mutagenesis site" description="Decreased interaction with VRK1." evidence="28">
    <original>E</original>
    <variation>A</variation>
    <location>
        <position position="62"/>
    </location>
</feature>
<feature type="mutagenesis site" description="Decreased interaction with VRK1." evidence="28">
    <original>E</original>
    <variation>A</variation>
    <location>
        <position position="65"/>
    </location>
</feature>
<feature type="mutagenesis site" description="No effect on interaction with VRK1." evidence="28">
    <original>D</original>
    <variation>A</variation>
    <location>
        <position position="73"/>
    </location>
</feature>
<feature type="mutagenesis site" description="No effect on interaction with VRK1." evidence="28">
    <original>N</original>
    <variation>A</variation>
    <location>
        <position position="90"/>
    </location>
</feature>
<feature type="mutagenesis site" description="Decreased interaction with VRK1." evidence="28">
    <original>D</original>
    <variation>A</variation>
    <location>
        <position position="91"/>
    </location>
</feature>
<feature type="mutagenesis site" description="No effect on interaction with VRK1." evidence="28">
    <original>E</original>
    <variation>A</variation>
    <location>
        <position position="92"/>
    </location>
</feature>
<feature type="mutagenesis site" description="Decreased interaction with VRK1." evidence="28">
    <original>E</original>
    <variation>A</variation>
    <location>
        <position position="93"/>
    </location>
</feature>
<feature type="helix" evidence="43">
    <location>
        <begin position="18"/>
        <end position="21"/>
    </location>
</feature>
<feature type="helix" evidence="43">
    <location>
        <begin position="28"/>
        <end position="37"/>
    </location>
</feature>
<feature type="strand" evidence="42">
    <location>
        <begin position="38"/>
        <end position="40"/>
    </location>
</feature>
<feature type="strand" evidence="43">
    <location>
        <begin position="42"/>
        <end position="44"/>
    </location>
</feature>
<feature type="helix" evidence="43">
    <location>
        <begin position="47"/>
        <end position="73"/>
    </location>
</feature>
<feature type="strand" evidence="43">
    <location>
        <begin position="77"/>
        <end position="79"/>
    </location>
</feature>
<feature type="helix" evidence="43">
    <location>
        <begin position="81"/>
        <end position="90"/>
    </location>
</feature>
<feature type="helix" evidence="43">
    <location>
        <begin position="92"/>
        <end position="97"/>
    </location>
</feature>
<feature type="turn" evidence="43">
    <location>
        <begin position="98"/>
        <end position="100"/>
    </location>
</feature>
<feature type="strand" evidence="41">
    <location>
        <begin position="101"/>
        <end position="103"/>
    </location>
</feature>
<feature type="helix" evidence="43">
    <location>
        <begin position="114"/>
        <end position="116"/>
    </location>
</feature>
<dbReference type="EMBL" id="Z83742">
    <property type="protein sequence ID" value="CAB06037.1"/>
    <property type="molecule type" value="Genomic_DNA"/>
</dbReference>
<dbReference type="EMBL" id="Z83739">
    <property type="protein sequence ID" value="CAB06034.1"/>
    <property type="molecule type" value="Genomic_DNA"/>
</dbReference>
<dbReference type="EMBL" id="X83549">
    <property type="protein sequence ID" value="CAA58539.1"/>
    <property type="molecule type" value="Genomic_DNA"/>
</dbReference>
<dbReference type="EMBL" id="X57138">
    <property type="protein sequence ID" value="CAA40417.1"/>
    <property type="molecule type" value="Genomic_DNA"/>
</dbReference>
<dbReference type="EMBL" id="L19778">
    <property type="protein sequence ID" value="AAC24466.1"/>
    <property type="molecule type" value="mRNA"/>
</dbReference>
<dbReference type="EMBL" id="AY131987">
    <property type="protein sequence ID" value="AAN59968.1"/>
    <property type="molecule type" value="Genomic_DNA"/>
</dbReference>
<dbReference type="EMBL" id="AY131989">
    <property type="protein sequence ID" value="AAN59970.1"/>
    <property type="molecule type" value="Genomic_DNA"/>
</dbReference>
<dbReference type="EMBL" id="AY131991">
    <property type="protein sequence ID" value="AAN59972.1"/>
    <property type="molecule type" value="Genomic_DNA"/>
</dbReference>
<dbReference type="EMBL" id="AY131992">
    <property type="protein sequence ID" value="AAN59973.1"/>
    <property type="molecule type" value="Genomic_DNA"/>
</dbReference>
<dbReference type="EMBL" id="AY131993">
    <property type="protein sequence ID" value="AAN59974.1"/>
    <property type="molecule type" value="Genomic_DNA"/>
</dbReference>
<dbReference type="EMBL" id="Z98744">
    <property type="status" value="NOT_ANNOTATED_CDS"/>
    <property type="molecule type" value="Genomic_DNA"/>
</dbReference>
<dbReference type="EMBL" id="AL009179">
    <property type="status" value="NOT_ANNOTATED_CDS"/>
    <property type="molecule type" value="Genomic_DNA"/>
</dbReference>
<dbReference type="EMBL" id="AL021807">
    <property type="status" value="NOT_ANNOTATED_CDS"/>
    <property type="molecule type" value="Genomic_DNA"/>
</dbReference>
<dbReference type="EMBL" id="BC016677">
    <property type="protein sequence ID" value="AAH16677.1"/>
    <property type="molecule type" value="mRNA"/>
</dbReference>
<dbReference type="EMBL" id="BC069306">
    <property type="protein sequence ID" value="AAH69306.1"/>
    <property type="molecule type" value="mRNA"/>
</dbReference>
<dbReference type="EMBL" id="BC104199">
    <property type="protein sequence ID" value="AAI04200.1"/>
    <property type="molecule type" value="mRNA"/>
</dbReference>
<dbReference type="EMBL" id="BC104198">
    <property type="protein sequence ID" value="AAI04199.1"/>
    <property type="molecule type" value="mRNA"/>
</dbReference>
<dbReference type="EMBL" id="BC105129">
    <property type="protein sequence ID" value="AAI05130.1"/>
    <property type="molecule type" value="mRNA"/>
</dbReference>
<dbReference type="EMBL" id="BC112072">
    <property type="protein sequence ID" value="AAI12073.1"/>
    <property type="molecule type" value="mRNA"/>
</dbReference>
<dbReference type="EMBL" id="BC112254">
    <property type="protein sequence ID" value="AAI12255.1"/>
    <property type="molecule type" value="mRNA"/>
</dbReference>
<dbReference type="EMBL" id="BC112256">
    <property type="protein sequence ID" value="AAI12257.1"/>
    <property type="molecule type" value="mRNA"/>
</dbReference>
<dbReference type="CCDS" id="CCDS4619.1"/>
<dbReference type="CCDS" id="CCDS4626.1"/>
<dbReference type="CCDS" id="CCDS4632.1"/>
<dbReference type="CCDS" id="CCDS4634.1"/>
<dbReference type="CCDS" id="CCDS4639.1"/>
<dbReference type="PIR" id="B56624">
    <property type="entry name" value="HSHUA1"/>
</dbReference>
<dbReference type="RefSeq" id="NP_003500.1">
    <property type="nucleotide sequence ID" value="NM_003509.2"/>
</dbReference>
<dbReference type="RefSeq" id="NP_003501.1">
    <property type="nucleotide sequence ID" value="NM_003510.2"/>
</dbReference>
<dbReference type="RefSeq" id="NP_003502.1">
    <property type="nucleotide sequence ID" value="NM_003511.2"/>
</dbReference>
<dbReference type="RefSeq" id="NP_003505.1">
    <property type="nucleotide sequence ID" value="NM_003514.2"/>
</dbReference>
<dbReference type="RefSeq" id="NP_066408.1">
    <property type="nucleotide sequence ID" value="NM_021064.5"/>
</dbReference>
<dbReference type="PDB" id="4QYL">
    <property type="method" value="X-ray"/>
    <property type="resolution" value="1.80 A"/>
    <property type="chains" value="E/F/G/H=2-13"/>
</dbReference>
<dbReference type="PDB" id="5KGF">
    <property type="method" value="EM"/>
    <property type="resolution" value="4.54 A"/>
    <property type="chains" value="C/G=1-130"/>
</dbReference>
<dbReference type="PDB" id="6R0C">
    <property type="method" value="EM"/>
    <property type="resolution" value="4.20 A"/>
    <property type="chains" value="C/G=1-130"/>
</dbReference>
<dbReference type="PDB" id="6RNY">
    <property type="method" value="EM"/>
    <property type="resolution" value="3.90 A"/>
    <property type="chains" value="C/G=1-130"/>
</dbReference>
<dbReference type="PDB" id="6X59">
    <property type="method" value="EM"/>
    <property type="resolution" value="2.98 A"/>
    <property type="chains" value="C/G=2-130"/>
</dbReference>
<dbReference type="PDB" id="6X5A">
    <property type="method" value="EM"/>
    <property type="resolution" value="4.36 A"/>
    <property type="chains" value="C/G=2-130"/>
</dbReference>
<dbReference type="PDB" id="6XJD">
    <property type="method" value="EM"/>
    <property type="resolution" value="6.80 A"/>
    <property type="chains" value="C/G=2-130"/>
</dbReference>
<dbReference type="PDB" id="7BG9">
    <property type="method" value="EM"/>
    <property type="resolution" value="3.80 A"/>
    <property type="chains" value="L=1-130"/>
</dbReference>
<dbReference type="PDB" id="7E8D">
    <property type="method" value="EM"/>
    <property type="resolution" value="2.80 A"/>
    <property type="chains" value="C/G=2-130"/>
</dbReference>
<dbReference type="PDB" id="7JO9">
    <property type="method" value="EM"/>
    <property type="resolution" value="3.30 A"/>
    <property type="chains" value="C/G=2-130"/>
</dbReference>
<dbReference type="PDB" id="7JOA">
    <property type="method" value="EM"/>
    <property type="resolution" value="3.30 A"/>
    <property type="chains" value="C/G=2-130"/>
</dbReference>
<dbReference type="PDB" id="7TAN">
    <property type="method" value="EM"/>
    <property type="resolution" value="3.00 A"/>
    <property type="chains" value="C/G=2-130"/>
</dbReference>
<dbReference type="PDB" id="7U50">
    <property type="method" value="EM"/>
    <property type="resolution" value="3.40 A"/>
    <property type="chains" value="C/G=2-130"/>
</dbReference>
<dbReference type="PDB" id="7U51">
    <property type="method" value="EM"/>
    <property type="resolution" value="3.10 A"/>
    <property type="chains" value="C/G=2-130"/>
</dbReference>
<dbReference type="PDB" id="7U52">
    <property type="method" value="EM"/>
    <property type="resolution" value="3.40 A"/>
    <property type="chains" value="C/G=2-130"/>
</dbReference>
<dbReference type="PDB" id="7U53">
    <property type="method" value="EM"/>
    <property type="resolution" value="4.00 A"/>
    <property type="chains" value="C/G=2-130"/>
</dbReference>
<dbReference type="PDB" id="7UV9">
    <property type="method" value="EM"/>
    <property type="resolution" value="3.20 A"/>
    <property type="chains" value="C/G=2-130"/>
</dbReference>
<dbReference type="PDB" id="8ATF">
    <property type="method" value="EM"/>
    <property type="resolution" value="3.45 A"/>
    <property type="chains" value="O/S=2-130"/>
</dbReference>
<dbReference type="PDB" id="8AV6">
    <property type="method" value="EM"/>
    <property type="resolution" value="4.68 A"/>
    <property type="chains" value="O/S=2-130"/>
</dbReference>
<dbReference type="PDB" id="8GUI">
    <property type="method" value="EM"/>
    <property type="resolution" value="2.81 A"/>
    <property type="chains" value="C/G=2-130"/>
</dbReference>
<dbReference type="PDB" id="8GUJ">
    <property type="method" value="EM"/>
    <property type="resolution" value="2.80 A"/>
    <property type="chains" value="C/G=2-130"/>
</dbReference>
<dbReference type="PDB" id="8GUK">
    <property type="method" value="EM"/>
    <property type="resolution" value="2.51 A"/>
    <property type="chains" value="C/G=2-130"/>
</dbReference>
<dbReference type="PDB" id="8OFF">
    <property type="method" value="EM"/>
    <property type="resolution" value="3.40 A"/>
    <property type="chains" value="Aa/Ab=1-130"/>
</dbReference>
<dbReference type="PDB" id="8QZM">
    <property type="method" value="EM"/>
    <property type="resolution" value="3.10 A"/>
    <property type="chains" value="C/G=2-130"/>
</dbReference>
<dbReference type="PDB" id="8VOB">
    <property type="method" value="EM"/>
    <property type="resolution" value="3.10 A"/>
    <property type="chains" value="K/R=13-120"/>
</dbReference>
<dbReference type="PDB" id="8VWS">
    <property type="method" value="EM"/>
    <property type="resolution" value="3.10 A"/>
    <property type="chains" value="C/G=2-130"/>
</dbReference>
<dbReference type="PDB" id="8VWT">
    <property type="method" value="EM"/>
    <property type="resolution" value="3.30 A"/>
    <property type="chains" value="C/G=2-130"/>
</dbReference>
<dbReference type="PDB" id="8VWU">
    <property type="method" value="EM"/>
    <property type="resolution" value="3.00 A"/>
    <property type="chains" value="C/G=2-130"/>
</dbReference>
<dbReference type="PDB" id="8VWV">
    <property type="method" value="EM"/>
    <property type="resolution" value="3.60 A"/>
    <property type="chains" value="C/G=2-130"/>
</dbReference>
<dbReference type="PDB" id="9DWF">
    <property type="method" value="EM"/>
    <property type="resolution" value="3.10 A"/>
    <property type="chains" value="C/G=2-130"/>
</dbReference>
<dbReference type="PDB" id="9DWG">
    <property type="method" value="EM"/>
    <property type="resolution" value="3.30 A"/>
    <property type="chains" value="C/G=2-130"/>
</dbReference>
<dbReference type="PDB" id="9DWH">
    <property type="method" value="EM"/>
    <property type="resolution" value="3.30 A"/>
    <property type="chains" value="C/G=2-130"/>
</dbReference>
<dbReference type="PDB" id="9DWI">
    <property type="method" value="EM"/>
    <property type="resolution" value="3.30 A"/>
    <property type="chains" value="C/G=2-130"/>
</dbReference>
<dbReference type="PDB" id="9DWJ">
    <property type="method" value="EM"/>
    <property type="resolution" value="3.40 A"/>
    <property type="chains" value="C/G=2-130"/>
</dbReference>
<dbReference type="PDB" id="9DWK">
    <property type="method" value="EM"/>
    <property type="resolution" value="4.30 A"/>
    <property type="chains" value="C/G=2-130"/>
</dbReference>
<dbReference type="PDB" id="9DWL">
    <property type="method" value="EM"/>
    <property type="resolution" value="3.90 A"/>
    <property type="chains" value="C/G=2-130"/>
</dbReference>
<dbReference type="PDB" id="9DWM">
    <property type="method" value="EM"/>
    <property type="resolution" value="4.20 A"/>
    <property type="chains" value="C/G=2-130"/>
</dbReference>
<dbReference type="PDBsum" id="4QYL"/>
<dbReference type="PDBsum" id="5KGF"/>
<dbReference type="PDBsum" id="6R0C"/>
<dbReference type="PDBsum" id="6RNY"/>
<dbReference type="PDBsum" id="6X59"/>
<dbReference type="PDBsum" id="6X5A"/>
<dbReference type="PDBsum" id="6XJD"/>
<dbReference type="PDBsum" id="7BG9"/>
<dbReference type="PDBsum" id="7E8D"/>
<dbReference type="PDBsum" id="7JO9"/>
<dbReference type="PDBsum" id="7JOA"/>
<dbReference type="PDBsum" id="7TAN"/>
<dbReference type="PDBsum" id="7U50"/>
<dbReference type="PDBsum" id="7U51"/>
<dbReference type="PDBsum" id="7U52"/>
<dbReference type="PDBsum" id="7U53"/>
<dbReference type="PDBsum" id="7UV9"/>
<dbReference type="PDBsum" id="8ATF"/>
<dbReference type="PDBsum" id="8AV6"/>
<dbReference type="PDBsum" id="8GUI"/>
<dbReference type="PDBsum" id="8GUJ"/>
<dbReference type="PDBsum" id="8GUK"/>
<dbReference type="PDBsum" id="8OFF"/>
<dbReference type="PDBsum" id="8QZM"/>
<dbReference type="PDBsum" id="8VOB"/>
<dbReference type="PDBsum" id="8VWS"/>
<dbReference type="PDBsum" id="8VWT"/>
<dbReference type="PDBsum" id="8VWU"/>
<dbReference type="PDBsum" id="8VWV"/>
<dbReference type="PDBsum" id="9DWF"/>
<dbReference type="PDBsum" id="9DWG"/>
<dbReference type="PDBsum" id="9DWH"/>
<dbReference type="PDBsum" id="9DWI"/>
<dbReference type="PDBsum" id="9DWJ"/>
<dbReference type="PDBsum" id="9DWK"/>
<dbReference type="PDBsum" id="9DWL"/>
<dbReference type="PDBsum" id="9DWM"/>
<dbReference type="EMDB" id="EMD-14198"/>
<dbReference type="EMDB" id="EMD-14199"/>
<dbReference type="EMDB" id="EMD-16859"/>
<dbReference type="EMDB" id="EMD-18778"/>
<dbReference type="EMDB" id="EMD-18793"/>
<dbReference type="EMDB" id="EMD-22046"/>
<dbReference type="EMDB" id="EMD-22047"/>
<dbReference type="EMDB" id="EMD-22206"/>
<dbReference type="EMDB" id="EMD-22408"/>
<dbReference type="EMDB" id="EMD-22409"/>
<dbReference type="EMDB" id="EMD-25777"/>
<dbReference type="EMDB" id="EMD-25778"/>
<dbReference type="EMDB" id="EMD-26336"/>
<dbReference type="EMDB" id="EMD-26337"/>
<dbReference type="EMDB" id="EMD-26338"/>
<dbReference type="EMDB" id="EMD-26339"/>
<dbReference type="EMDB" id="EMD-26809"/>
<dbReference type="EMDB" id="EMD-26810"/>
<dbReference type="EMDB" id="EMD-31015"/>
<dbReference type="EMDB" id="EMD-34274"/>
<dbReference type="EMDB" id="EMD-34275"/>
<dbReference type="EMDB" id="EMD-43373"/>
<dbReference type="EMDB" id="EMD-43595"/>
<dbReference type="EMDB" id="EMD-43596"/>
<dbReference type="EMDB" id="EMD-43600"/>
<dbReference type="EMDB" id="EMD-43601"/>
<dbReference type="EMDB" id="EMD-4692"/>
<dbReference type="EMDB" id="EMD-47242"/>
<dbReference type="EMDB" id="EMD-47243"/>
<dbReference type="EMDB" id="EMD-47246"/>
<dbReference type="EMDB" id="EMD-47249"/>
<dbReference type="EMDB" id="EMD-47252"/>
<dbReference type="EMDB" id="EMD-47253"/>
<dbReference type="EMDB" id="EMD-47254"/>
<dbReference type="EMDB" id="EMD-47255"/>
<dbReference type="EMDB" id="EMD-4960"/>
<dbReference type="EMDB" id="EMD-8246"/>
<dbReference type="SMR" id="P0C0S8"/>
<dbReference type="BioGRID" id="113925">
    <property type="interactions" value="77"/>
</dbReference>
<dbReference type="BioGRID" id="113926">
    <property type="interactions" value="17"/>
</dbReference>
<dbReference type="BioGRID" id="113928">
    <property type="interactions" value="76"/>
</dbReference>
<dbReference type="BioGRID" id="113932">
    <property type="interactions" value="249"/>
</dbReference>
<dbReference type="BioGRID" id="114459">
    <property type="interactions" value="287"/>
</dbReference>
<dbReference type="ComplexPortal" id="CPX-25754">
    <property type="entry name" value="Nucleosome complex, H2A type 1 variant"/>
</dbReference>
<dbReference type="DIP" id="DIP-39638N"/>
<dbReference type="FunCoup" id="P0C0S8">
    <property type="interactions" value="893"/>
</dbReference>
<dbReference type="IntAct" id="P0C0S8">
    <property type="interactions" value="340"/>
</dbReference>
<dbReference type="MINT" id="P0C0S8"/>
<dbReference type="STRING" id="9606.ENSP00000351589"/>
<dbReference type="GlyGen" id="P0C0S8">
    <property type="glycosylation" value="1 site, 1 O-linked glycan (1 site)"/>
</dbReference>
<dbReference type="iPTMnet" id="P0C0S8"/>
<dbReference type="PhosphoSitePlus" id="P0C0S8"/>
<dbReference type="SwissPalm" id="P0C0S8"/>
<dbReference type="BioMuta" id="HIST1H2AI"/>
<dbReference type="DMDM" id="83288406"/>
<dbReference type="jPOST" id="P0C0S8"/>
<dbReference type="MassIVE" id="P0C0S8"/>
<dbReference type="PaxDb" id="9606-ENSP00000351589"/>
<dbReference type="PeptideAtlas" id="P0C0S8"/>
<dbReference type="PRIDE" id="P0C0S8"/>
<dbReference type="Pumba" id="P0C0S8"/>
<dbReference type="TopDownProteomics" id="P0C0S8"/>
<dbReference type="ABCD" id="P0C0S8">
    <property type="antibodies" value="4 sequenced antibodies"/>
</dbReference>
<dbReference type="Antibodypedia" id="44633">
    <property type="antibodies" value="340 antibodies from 22 providers"/>
</dbReference>
<dbReference type="Antibodypedia" id="64494">
    <property type="antibodies" value="145 antibodies from 4 providers"/>
</dbReference>
<dbReference type="Antibodypedia" id="72665">
    <property type="antibodies" value="30 antibodies from 2 providers"/>
</dbReference>
<dbReference type="Antibodypedia" id="74550">
    <property type="antibodies" value="29 antibodies from 3 providers"/>
</dbReference>
<dbReference type="Antibodypedia" id="76502">
    <property type="antibodies" value="6 antibodies from 3 providers"/>
</dbReference>
<dbReference type="DNASU" id="8329"/>
<dbReference type="Ensembl" id="ENST00000358739.5">
    <property type="protein sequence ID" value="ENSP00000351589.3"/>
    <property type="gene ID" value="ENSG00000196747.5"/>
</dbReference>
<dbReference type="Ensembl" id="ENST00000359193.4">
    <property type="protein sequence ID" value="ENSP00000352119.2"/>
    <property type="gene ID" value="ENSG00000196787.5"/>
</dbReference>
<dbReference type="Ensembl" id="ENST00000359611.4">
    <property type="protein sequence ID" value="ENSP00000352627.3"/>
    <property type="gene ID" value="ENSG00000278677.2"/>
</dbReference>
<dbReference type="Ensembl" id="ENST00000613174.2">
    <property type="protein sequence ID" value="ENSP00000482538.2"/>
    <property type="gene ID" value="ENSG00000276903.2"/>
</dbReference>
<dbReference type="Ensembl" id="ENST00000618958.2">
    <property type="protein sequence ID" value="ENSP00000482431.2"/>
    <property type="gene ID" value="ENSG00000275221.3"/>
</dbReference>
<dbReference type="Ensembl" id="ENST00000715903.1">
    <property type="protein sequence ID" value="ENSP00000520538.1"/>
    <property type="gene ID" value="ENSG00000196787.5"/>
</dbReference>
<dbReference type="Ensembl" id="ENST00000718365.1">
    <property type="protein sequence ID" value="ENSP00000520791.1"/>
    <property type="gene ID" value="ENSG00000275221.3"/>
</dbReference>
<dbReference type="GeneID" id="8329"/>
<dbReference type="GeneID" id="8330"/>
<dbReference type="GeneID" id="8332"/>
<dbReference type="GeneID" id="8336"/>
<dbReference type="GeneID" id="8969"/>
<dbReference type="KEGG" id="hsa:8329"/>
<dbReference type="KEGG" id="hsa:8330"/>
<dbReference type="KEGG" id="hsa:8332"/>
<dbReference type="KEGG" id="hsa:8336"/>
<dbReference type="KEGG" id="hsa:8969"/>
<dbReference type="MANE-Select" id="ENST00000358739.5">
    <property type="protein sequence ID" value="ENSP00000351589.3"/>
    <property type="RefSeq nucleotide sequence ID" value="NM_003509.3"/>
    <property type="RefSeq protein sequence ID" value="NP_003500.1"/>
</dbReference>
<dbReference type="MANE-Select" id="ENST00000359193.4">
    <property type="protein sequence ID" value="ENSP00000352119.2"/>
    <property type="RefSeq nucleotide sequence ID" value="NM_021064.5"/>
    <property type="RefSeq protein sequence ID" value="NP_066408.1"/>
</dbReference>
<dbReference type="MANE-Select" id="ENST00000359611.4">
    <property type="protein sequence ID" value="ENSP00000352627.3"/>
    <property type="RefSeq nucleotide sequence ID" value="NM_003514.2"/>
    <property type="RefSeq protein sequence ID" value="NP_003505.1"/>
</dbReference>
<dbReference type="MANE-Select" id="ENST00000613174.2">
    <property type="protein sequence ID" value="ENSP00000482538.2"/>
    <property type="RefSeq nucleotide sequence ID" value="NM_003511.3"/>
    <property type="RefSeq protein sequence ID" value="NP_003502.1"/>
</dbReference>
<dbReference type="MANE-Select" id="ENST00000618958.2">
    <property type="protein sequence ID" value="ENSP00000482431.2"/>
    <property type="RefSeq nucleotide sequence ID" value="NM_003510.3"/>
    <property type="RefSeq protein sequence ID" value="NP_003501.1"/>
</dbReference>
<dbReference type="UCSC" id="uc003niw.4">
    <property type="organism name" value="human"/>
</dbReference>
<dbReference type="AGR" id="HGNC:4725"/>
<dbReference type="AGR" id="HGNC:4726"/>
<dbReference type="AGR" id="HGNC:4730"/>
<dbReference type="AGR" id="HGNC:4735"/>
<dbReference type="AGR" id="HGNC:4737"/>
<dbReference type="CTD" id="8329"/>
<dbReference type="CTD" id="8330"/>
<dbReference type="CTD" id="8332"/>
<dbReference type="CTD" id="8336"/>
<dbReference type="CTD" id="8969"/>
<dbReference type="DisGeNET" id="8329"/>
<dbReference type="DisGeNET" id="8330"/>
<dbReference type="DisGeNET" id="8332"/>
<dbReference type="DisGeNET" id="8336"/>
<dbReference type="DisGeNET" id="8969"/>
<dbReference type="GeneCards" id="H2AC11"/>
<dbReference type="GeneCards" id="H2AC13"/>
<dbReference type="GeneCards" id="H2AC15"/>
<dbReference type="GeneCards" id="H2AC16"/>
<dbReference type="GeneCards" id="H2AC17"/>
<dbReference type="HGNC" id="HGNC:4737">
    <property type="gene designation" value="H2AC11"/>
</dbReference>
<dbReference type="HGNC" id="HGNC:4725">
    <property type="gene designation" value="H2AC13"/>
</dbReference>
<dbReference type="HGNC" id="HGNC:4726">
    <property type="gene designation" value="H2AC15"/>
</dbReference>
<dbReference type="HGNC" id="HGNC:4730">
    <property type="gene designation" value="H2AC16"/>
</dbReference>
<dbReference type="HGNC" id="HGNC:4735">
    <property type="gene designation" value="H2AC17"/>
</dbReference>
<dbReference type="HPA" id="ENSG00000196747">
    <property type="expression patterns" value="Tissue enhanced (bone)"/>
</dbReference>
<dbReference type="HPA" id="ENSG00000196787">
    <property type="expression patterns" value="Tissue enhanced (bone marrow, testis)"/>
</dbReference>
<dbReference type="HPA" id="ENSG00000275221">
    <property type="expression patterns" value="Low tissue specificity"/>
</dbReference>
<dbReference type="HPA" id="ENSG00000276903">
    <property type="expression patterns" value="Tissue enriched (bone)"/>
</dbReference>
<dbReference type="HPA" id="ENSG00000278677">
    <property type="expression patterns" value="Tissue enhanced (bone)"/>
</dbReference>
<dbReference type="MalaCards" id="H2AC11"/>
<dbReference type="MalaCards" id="H2AC16"/>
<dbReference type="MalaCards" id="H2AC17"/>
<dbReference type="MIM" id="602787">
    <property type="type" value="gene"/>
</dbReference>
<dbReference type="MIM" id="602788">
    <property type="type" value="gene"/>
</dbReference>
<dbReference type="MIM" id="602793">
    <property type="type" value="gene"/>
</dbReference>
<dbReference type="MIM" id="602796">
    <property type="type" value="gene"/>
</dbReference>
<dbReference type="MIM" id="615012">
    <property type="type" value="gene"/>
</dbReference>
<dbReference type="neXtProt" id="NX_P0C0S8"/>
<dbReference type="OpenTargets" id="ENSG00000196747"/>
<dbReference type="OpenTargets" id="ENSG00000196787"/>
<dbReference type="OpenTargets" id="ENSG00000275221"/>
<dbReference type="OpenTargets" id="ENSG00000276903"/>
<dbReference type="OpenTargets" id="ENSG00000278677"/>
<dbReference type="VEuPathDB" id="HostDB:ENSG00000196747"/>
<dbReference type="VEuPathDB" id="HostDB:ENSG00000196787"/>
<dbReference type="VEuPathDB" id="HostDB:ENSG00000275221"/>
<dbReference type="VEuPathDB" id="HostDB:ENSG00000276903"/>
<dbReference type="VEuPathDB" id="HostDB:ENSG00000278677"/>
<dbReference type="eggNOG" id="KOG1756">
    <property type="taxonomic scope" value="Eukaryota"/>
</dbReference>
<dbReference type="GeneTree" id="ENSGT00940000153125"/>
<dbReference type="HOGENOM" id="CLU_062828_3_1_1"/>
<dbReference type="InParanoid" id="P0C0S8"/>
<dbReference type="OMA" id="NYCERIG"/>
<dbReference type="OrthoDB" id="9829024at2759"/>
<dbReference type="PAN-GO" id="P0C0S8">
    <property type="GO annotations" value="1 GO annotation based on evolutionary models"/>
</dbReference>
<dbReference type="PhylomeDB" id="P0C0S8"/>
<dbReference type="TreeFam" id="TF300137"/>
<dbReference type="PathwayCommons" id="P0C0S8"/>
<dbReference type="Reactome" id="R-HSA-3214815">
    <property type="pathway name" value="HDACs deacetylate histones"/>
</dbReference>
<dbReference type="Reactome" id="R-HSA-3214847">
    <property type="pathway name" value="HATs acetylate histones"/>
</dbReference>
<dbReference type="Reactome" id="R-HSA-3214858">
    <property type="pathway name" value="RMTs methylate histone arginines"/>
</dbReference>
<dbReference type="Reactome" id="R-HSA-5689603">
    <property type="pathway name" value="UCH proteinases"/>
</dbReference>
<dbReference type="Reactome" id="R-HSA-5689880">
    <property type="pathway name" value="Ub-specific processing proteases"/>
</dbReference>
<dbReference type="Reactome" id="R-HSA-5689901">
    <property type="pathway name" value="Metalloprotease DUBs"/>
</dbReference>
<dbReference type="Reactome" id="R-HSA-9609690">
    <property type="pathway name" value="HCMV Early Events"/>
</dbReference>
<dbReference type="Reactome" id="R-HSA-9610379">
    <property type="pathway name" value="HCMV Late Events"/>
</dbReference>
<dbReference type="SignaLink" id="P0C0S8"/>
<dbReference type="SIGNOR" id="P0C0S8"/>
<dbReference type="BioGRID-ORCS" id="8329">
    <property type="hits" value="284 hits in 684 CRISPR screens"/>
</dbReference>
<dbReference type="BioGRID-ORCS" id="8330">
    <property type="hits" value="223 hits in 1127 CRISPR screens"/>
</dbReference>
<dbReference type="BioGRID-ORCS" id="8332">
    <property type="hits" value="255 hits in 1043 CRISPR screens"/>
</dbReference>
<dbReference type="BioGRID-ORCS" id="8336">
    <property type="hits" value="318 hits in 1061 CRISPR screens"/>
</dbReference>
<dbReference type="BioGRID-ORCS" id="8969">
    <property type="hits" value="44 hits in 1102 CRISPR screens"/>
</dbReference>
<dbReference type="CD-CODE" id="232F8A39">
    <property type="entry name" value="P-body"/>
</dbReference>
<dbReference type="CD-CODE" id="91857CE7">
    <property type="entry name" value="Nucleolus"/>
</dbReference>
<dbReference type="ChiTaRS" id="HIST1H2AI">
    <property type="organism name" value="human"/>
</dbReference>
<dbReference type="ChiTaRS" id="HIST1H2AM">
    <property type="organism name" value="human"/>
</dbReference>
<dbReference type="EvolutionaryTrace" id="P0C0S8"/>
<dbReference type="GeneWiki" id="HIST1H2AG"/>
<dbReference type="GeneWiki" id="HIST1H2AI"/>
<dbReference type="GeneWiki" id="HIST1H2AK"/>
<dbReference type="GeneWiki" id="HIST1H2AL"/>
<dbReference type="GeneWiki" id="HIST1H2AM"/>
<dbReference type="Pharos" id="P0C0S8">
    <property type="development level" value="Tbio"/>
</dbReference>
<dbReference type="PRO" id="PR:P0C0S8"/>
<dbReference type="Proteomes" id="UP000005640">
    <property type="component" value="Chromosome 6"/>
</dbReference>
<dbReference type="RNAct" id="P0C0S8">
    <property type="molecule type" value="protein"/>
</dbReference>
<dbReference type="Bgee" id="ENSG00000196747">
    <property type="expression patterns" value="Expressed in bone marrow cell and 94 other cell types or tissues"/>
</dbReference>
<dbReference type="ExpressionAtlas" id="P0C0S8">
    <property type="expression patterns" value="baseline and differential"/>
</dbReference>
<dbReference type="GO" id="GO:0070062">
    <property type="term" value="C:extracellular exosome"/>
    <property type="evidence" value="ECO:0007005"/>
    <property type="project" value="UniProtKB"/>
</dbReference>
<dbReference type="GO" id="GO:0000786">
    <property type="term" value="C:nucleosome"/>
    <property type="evidence" value="ECO:0000318"/>
    <property type="project" value="GO_Central"/>
</dbReference>
<dbReference type="GO" id="GO:0005634">
    <property type="term" value="C:nucleus"/>
    <property type="evidence" value="ECO:0000314"/>
    <property type="project" value="UniProtKB"/>
</dbReference>
<dbReference type="GO" id="GO:0003677">
    <property type="term" value="F:DNA binding"/>
    <property type="evidence" value="ECO:0007669"/>
    <property type="project" value="UniProtKB-KW"/>
</dbReference>
<dbReference type="GO" id="GO:0019899">
    <property type="term" value="F:enzyme binding"/>
    <property type="evidence" value="ECO:0000353"/>
    <property type="project" value="UniProtKB"/>
</dbReference>
<dbReference type="GO" id="GO:0046982">
    <property type="term" value="F:protein heterodimerization activity"/>
    <property type="evidence" value="ECO:0007669"/>
    <property type="project" value="InterPro"/>
</dbReference>
<dbReference type="GO" id="GO:0030527">
    <property type="term" value="F:structural constituent of chromatin"/>
    <property type="evidence" value="ECO:0000318"/>
    <property type="project" value="GO_Central"/>
</dbReference>
<dbReference type="GO" id="GO:0031507">
    <property type="term" value="P:heterochromatin formation"/>
    <property type="evidence" value="ECO:0000318"/>
    <property type="project" value="GO_Central"/>
</dbReference>
<dbReference type="CDD" id="cd00074">
    <property type="entry name" value="HFD_H2A"/>
    <property type="match status" value="1"/>
</dbReference>
<dbReference type="FunFam" id="1.10.20.10:FF:000103">
    <property type="entry name" value="Histone H2A type 1"/>
    <property type="match status" value="1"/>
</dbReference>
<dbReference type="Gene3D" id="1.10.20.10">
    <property type="entry name" value="Histone, subunit A"/>
    <property type="match status" value="1"/>
</dbReference>
<dbReference type="InterPro" id="IPR009072">
    <property type="entry name" value="Histone-fold"/>
</dbReference>
<dbReference type="InterPro" id="IPR002119">
    <property type="entry name" value="Histone_H2A"/>
</dbReference>
<dbReference type="InterPro" id="IPR007125">
    <property type="entry name" value="Histone_H2A/H2B/H3"/>
</dbReference>
<dbReference type="InterPro" id="IPR032454">
    <property type="entry name" value="Histone_H2A_C"/>
</dbReference>
<dbReference type="InterPro" id="IPR032458">
    <property type="entry name" value="Histone_H2A_CS"/>
</dbReference>
<dbReference type="PANTHER" id="PTHR23430">
    <property type="entry name" value="HISTONE H2A"/>
    <property type="match status" value="1"/>
</dbReference>
<dbReference type="Pfam" id="PF00125">
    <property type="entry name" value="Histone"/>
    <property type="match status" value="1"/>
</dbReference>
<dbReference type="Pfam" id="PF16211">
    <property type="entry name" value="Histone_H2A_C"/>
    <property type="match status" value="1"/>
</dbReference>
<dbReference type="PRINTS" id="PR00620">
    <property type="entry name" value="HISTONEH2A"/>
</dbReference>
<dbReference type="SMART" id="SM00414">
    <property type="entry name" value="H2A"/>
    <property type="match status" value="1"/>
</dbReference>
<dbReference type="SUPFAM" id="SSF47113">
    <property type="entry name" value="Histone-fold"/>
    <property type="match status" value="1"/>
</dbReference>
<dbReference type="PROSITE" id="PS00046">
    <property type="entry name" value="HISTONE_H2A"/>
    <property type="match status" value="1"/>
</dbReference>
<keyword id="KW-0002">3D-structure</keyword>
<keyword id="KW-0007">Acetylation</keyword>
<keyword id="KW-0158">Chromosome</keyword>
<keyword id="KW-0164">Citrullination</keyword>
<keyword id="KW-0238">DNA-binding</keyword>
<keyword id="KW-0379">Hydroxylation</keyword>
<keyword id="KW-1017">Isopeptide bond</keyword>
<keyword id="KW-0488">Methylation</keyword>
<keyword id="KW-0544">Nucleosome core</keyword>
<keyword id="KW-0539">Nucleus</keyword>
<keyword id="KW-0597">Phosphoprotein</keyword>
<keyword id="KW-1185">Reference proteome</keyword>
<keyword id="KW-0832">Ubl conjugation</keyword>
<accession>P0C0S8</accession>
<accession>P02261</accession>
<accession>Q2M1R2</accession>
<accession>Q76PA6</accession>
<gene>
    <name evidence="34" type="primary">H2AC11</name>
    <name type="synonym">H2AFP</name>
    <name type="synonym">HIST1H2AG</name>
</gene>
<gene>
    <name evidence="30" type="primary">H2AC13</name>
    <name type="synonym">H2AFC</name>
    <name type="synonym">HIST1H2AI</name>
</gene>
<gene>
    <name evidence="31" type="primary">H2AC15</name>
    <name type="synonym">H2AFD</name>
    <name type="synonym">HIST1H2AK</name>
</gene>
<gene>
    <name evidence="32" type="primary">H2AC16</name>
    <name type="synonym">H2AFI</name>
    <name type="synonym">HIST1H2AL</name>
</gene>
<gene>
    <name evidence="33" type="primary">H2AC17</name>
    <name type="synonym">H2AFN</name>
    <name type="synonym">HIST1H2AM</name>
</gene>
<organism>
    <name type="scientific">Homo sapiens</name>
    <name type="common">Human</name>
    <dbReference type="NCBI Taxonomy" id="9606"/>
    <lineage>
        <taxon>Eukaryota</taxon>
        <taxon>Metazoa</taxon>
        <taxon>Chordata</taxon>
        <taxon>Craniata</taxon>
        <taxon>Vertebrata</taxon>
        <taxon>Euteleostomi</taxon>
        <taxon>Mammalia</taxon>
        <taxon>Eutheria</taxon>
        <taxon>Euarchontoglires</taxon>
        <taxon>Primates</taxon>
        <taxon>Haplorrhini</taxon>
        <taxon>Catarrhini</taxon>
        <taxon>Hominidae</taxon>
        <taxon>Homo</taxon>
    </lineage>
</organism>
<evidence type="ECO:0000250" key="1">
    <source>
        <dbReference type="UniProtKB" id="P0C0S5"/>
    </source>
</evidence>
<evidence type="ECO:0000250" key="2">
    <source>
        <dbReference type="UniProtKB" id="P0C0S9"/>
    </source>
</evidence>
<evidence type="ECO:0000250" key="3">
    <source>
        <dbReference type="UniProtKB" id="P22752"/>
    </source>
</evidence>
<evidence type="ECO:0000256" key="4">
    <source>
        <dbReference type="SAM" id="MobiDB-lite"/>
    </source>
</evidence>
<evidence type="ECO:0000269" key="5">
    <source>
    </source>
</evidence>
<evidence type="ECO:0000269" key="6">
    <source>
    </source>
</evidence>
<evidence type="ECO:0000269" key="7">
    <source>
    </source>
</evidence>
<evidence type="ECO:0000269" key="8">
    <source>
    </source>
</evidence>
<evidence type="ECO:0000269" key="9">
    <source>
    </source>
</evidence>
<evidence type="ECO:0000269" key="10">
    <source>
    </source>
</evidence>
<evidence type="ECO:0000269" key="11">
    <source>
    </source>
</evidence>
<evidence type="ECO:0000269" key="12">
    <source>
    </source>
</evidence>
<evidence type="ECO:0000269" key="13">
    <source>
    </source>
</evidence>
<evidence type="ECO:0000269" key="14">
    <source>
    </source>
</evidence>
<evidence type="ECO:0000269" key="15">
    <source>
    </source>
</evidence>
<evidence type="ECO:0000269" key="16">
    <source>
    </source>
</evidence>
<evidence type="ECO:0000269" key="17">
    <source>
    </source>
</evidence>
<evidence type="ECO:0000269" key="18">
    <source>
    </source>
</evidence>
<evidence type="ECO:0000269" key="19">
    <source>
    </source>
</evidence>
<evidence type="ECO:0000269" key="20">
    <source>
    </source>
</evidence>
<evidence type="ECO:0000269" key="21">
    <source>
    </source>
</evidence>
<evidence type="ECO:0000269" key="22">
    <source>
    </source>
</evidence>
<evidence type="ECO:0000269" key="23">
    <source>
    </source>
</evidence>
<evidence type="ECO:0000269" key="24">
    <source>
    </source>
</evidence>
<evidence type="ECO:0000269" key="25">
    <source>
    </source>
</evidence>
<evidence type="ECO:0000269" key="26">
    <source>
    </source>
</evidence>
<evidence type="ECO:0000269" key="27">
    <source>
    </source>
</evidence>
<evidence type="ECO:0000269" key="28">
    <source>
    </source>
</evidence>
<evidence type="ECO:0000305" key="29"/>
<evidence type="ECO:0000312" key="30">
    <source>
        <dbReference type="HGNC" id="HGNC:4725"/>
    </source>
</evidence>
<evidence type="ECO:0000312" key="31">
    <source>
        <dbReference type="HGNC" id="HGNC:4726"/>
    </source>
</evidence>
<evidence type="ECO:0000312" key="32">
    <source>
        <dbReference type="HGNC" id="HGNC:4730"/>
    </source>
</evidence>
<evidence type="ECO:0000312" key="33">
    <source>
        <dbReference type="HGNC" id="HGNC:4735"/>
    </source>
</evidence>
<evidence type="ECO:0000312" key="34">
    <source>
        <dbReference type="HGNC" id="HGNC:4737"/>
    </source>
</evidence>
<evidence type="ECO:0007744" key="35">
    <source>
        <dbReference type="PDB" id="6X59"/>
    </source>
</evidence>
<evidence type="ECO:0007744" key="36">
    <source>
        <dbReference type="PDB" id="6X5A"/>
    </source>
</evidence>
<evidence type="ECO:0007744" key="37">
    <source>
        <dbReference type="PDB" id="6XJD"/>
    </source>
</evidence>
<evidence type="ECO:0007744" key="38">
    <source>
        <dbReference type="PDB" id="7JO9"/>
    </source>
</evidence>
<evidence type="ECO:0007744" key="39">
    <source>
        <dbReference type="PDB" id="7JOA"/>
    </source>
</evidence>
<evidence type="ECO:0007744" key="40">
    <source>
        <dbReference type="PDB" id="7TAN"/>
    </source>
</evidence>
<evidence type="ECO:0007829" key="41">
    <source>
        <dbReference type="PDB" id="7E8D"/>
    </source>
</evidence>
<evidence type="ECO:0007829" key="42">
    <source>
        <dbReference type="PDB" id="7UV9"/>
    </source>
</evidence>
<evidence type="ECO:0007829" key="43">
    <source>
        <dbReference type="PDB" id="8GUK"/>
    </source>
</evidence>
<comment type="function">
    <text>Core component of nucleosome. Nucleosomes wrap and compact DNA into chromatin, limiting DNA accessibility to the cellular machineries which require DNA as a template. Histones thereby play a central role in transcription regulation, DNA repair, DNA replication and chromosomal stability. DNA accessibility is regulated via a complex set of post-translational modifications of histones, also called histone code, and nucleosome remodeling.</text>
</comment>
<comment type="subunit">
    <text evidence="28">The nucleosome is a histone octamer containing two molecules each of H2A, H2B, H3 and H4 assembled in one H3-H4 heterotetramer and two H2A-H2B heterodimers. The octamer wraps approximately 147 bp of DNA. Interacts with VRK1; the interaction is mediated by the nucleosome acidic patch, a cluster of negatively charged residues of H2A and H2B forming a cleft within the nucleosome core (PubMed:35390161).</text>
</comment>
<comment type="interaction">
    <interactant intactId="EBI-1390628">
        <id>P0C0S8</id>
    </interactant>
    <interactant intactId="EBI-2837428">
        <id>P55201</id>
        <label>BRPF1</label>
    </interactant>
    <organismsDiffer>false</organismsDiffer>
    <experiments>8</experiments>
</comment>
<comment type="interaction">
    <interactant intactId="EBI-1390628">
        <id>P0C0S8</id>
    </interactant>
    <interactant intactId="EBI-11017224">
        <id>Q99543</id>
        <label>DNAJC2</label>
    </interactant>
    <organismsDiffer>false</organismsDiffer>
    <experiments>2</experiments>
</comment>
<comment type="interaction">
    <interactant intactId="EBI-1390628">
        <id>P0C0S8</id>
    </interactant>
    <interactant intactId="EBI-724057">
        <id>O95760</id>
        <label>IL33</label>
    </interactant>
    <organismsDiffer>false</organismsDiffer>
    <experiments>3</experiments>
</comment>
<comment type="interaction">
    <interactant intactId="EBI-1390628">
        <id>P0C0S8</id>
    </interactant>
    <interactant intactId="EBI-722416">
        <id>Q99496</id>
        <label>RNF2</label>
    </interactant>
    <organismsDiffer>false</organismsDiffer>
    <experiments>5</experiments>
</comment>
<comment type="interaction">
    <interactant intactId="EBI-1390628">
        <id>P0C0S8</id>
    </interactant>
    <interactant intactId="EBI-347088">
        <id>P63104</id>
        <label>YWHAZ</label>
    </interactant>
    <organismsDiffer>false</organismsDiffer>
    <experiments>2</experiments>
</comment>
<comment type="interaction">
    <interactant intactId="EBI-1390628">
        <id>P0C0S8</id>
    </interactant>
    <interactant intactId="EBI-7971837">
        <id>Q9DUM3</id>
    </interactant>
    <organismsDiffer>true</organismsDiffer>
    <experiments>3</experiments>
</comment>
<comment type="subcellular location">
    <subcellularLocation>
        <location>Nucleus</location>
    </subcellularLocation>
    <subcellularLocation>
        <location>Chromosome</location>
    </subcellularLocation>
</comment>
<comment type="PTM">
    <text evidence="9">Deiminated on Arg-4 in granulocytes upon calcium entry.</text>
</comment>
<comment type="PTM">
    <text evidence="8 10 12 13 14 15 16 19 20 22 24 25">Monoubiquitination of Lys-120 (H2AK119Ub) by RING1, TRIM37 and RNF2/RING2 complex gives a specific tag for epigenetic transcriptional repression and participates in X chromosome inactivation of female mammals. It is involved in the initiation of both imprinted and random X inactivation. Ubiquitinated H2A is enriched in inactive X chromosome chromatin. Ubiquitination of H2A functions downstream of methylation of 'Lys-27' of histone H3 (H3K27me). H2AK119Ub by RNF2/RING2 can also be induced by ultraviolet and may be involved in DNA repair. Monoubiquitination of Lys-120 (H2AK119Ub) by TRIM37 may promote transformation of cells in a number of breast cancers (PubMed:25470042). Following DNA double-strand breaks (DSBs), it is ubiquitinated through 'Lys-63' linkage of ubiquitin moieties by the E2 ligase UBE2N and the E3 ligases RNF8 and RNF168, leading to the recruitment of repair proteins to sites of DNA damage. Ubiquitination at Lys-14 and Lys-16 (H2AK13Ub and H2AK15Ub, respectively) in response to DNA damage is initiated by RNF168 that mediates monoubiquitination at these 2 sites, and 'Lys-63'-linked ubiquitin are then conjugated to monoubiquitin; RNF8 is able to extend 'Lys-63'-linked ubiquitin chains in vitro. Deubiquitinated by USP51 at Lys-14 and Lys-16 (H2AK13Ub and H2AK15Ub, respectively) after damaged DNA is repaired (PubMed:27083998). H2AK119Ub and ionizing radiation-induced 'Lys-63'-linked ubiquitination (H2AK13Ub and H2AK15Ub) are distinct events.</text>
</comment>
<comment type="PTM">
    <text evidence="5 6 7 9 11 21">Phosphorylation on Ser-2 (H2AS1ph) is enhanced during mitosis. Phosphorylation on Ser-2 by RPS6KA5/MSK1 directly represses transcription. Acetylation of H3 inhibits Ser-2 phosphorylation by RPS6KA5/MSK1. Phosphorylation at Thr-121 (H2AT120ph) by DCAF1 is present in the regulatory region of many tumor suppresor genes and down-regulates their transcription.</text>
</comment>
<comment type="PTM">
    <text evidence="3">Symmetric dimethylation on Arg-4 by the PRDM1/PRMT5 complex may play a crucial role in the germ-cell lineage.</text>
</comment>
<comment type="PTM">
    <text evidence="22">Glutamine methylation at Gln-105 (H2AQ104me) by FBL is specifically dedicated to polymerase I. It is present at 35S ribosomal DNA locus and impairs binding of the FACT complex (PubMed:24352239).</text>
</comment>
<comment type="PTM">
    <text evidence="17">Crotonylation (Kcr) is specifically present in male germ cells and marks testis-specific genes in post-meiotic cells, including X-linked genes that escape sex chromosome inactivation in haploid cells. Crotonylation marks active promoters and enhancers and confers resistance to transcriptional repressors. It is also associated with post-meiotically activated genes on autosomes.</text>
</comment>
<comment type="PTM">
    <text evidence="1">Lactylated in macrophages by EP300/P300 by using lactoyl-CoA directly derived from endogenous or exogenous lactate, leading to stimulates gene transcription.</text>
</comment>
<comment type="mass spectrometry">
    <text>Monoisotopic with N-acetylserine.</text>
</comment>
<comment type="similarity">
    <text evidence="29">Belongs to the histone H2A family.</text>
</comment>
<protein>
    <recommendedName>
        <fullName>Histone H2A type 1</fullName>
        <shortName>H2A.1</shortName>
    </recommendedName>
    <alternativeName>
        <fullName>Histone H2A/ptl</fullName>
    </alternativeName>
</protein>
<proteinExistence type="evidence at protein level"/>
<reference key="1">
    <citation type="journal article" date="1997" name="Hum. Genet.">
        <title>The human histone gene cluster at the D6S105 locus.</title>
        <authorList>
            <person name="Albig W."/>
            <person name="Doenecke D."/>
        </authorList>
    </citation>
    <scope>NUCLEOTIDE SEQUENCE [GENOMIC DNA] (H2AC13; H2AC15 AND H2AC16)</scope>
</reference>
<reference key="2">
    <citation type="journal article" date="1999" name="Biol. Chem.">
        <title>The human H2A and H2B histone gene complement.</title>
        <authorList>
            <person name="Albig W."/>
            <person name="Trappe R."/>
            <person name="Kardalinou E."/>
            <person name="Eick S."/>
            <person name="Doenecke D."/>
        </authorList>
    </citation>
    <scope>NUCLEOTIDE SEQUENCE [GENOMIC DNA] (H2AC13; H2AC15 AND H2AC16)</scope>
</reference>
<reference key="3">
    <citation type="journal article" date="1991" name="DNA Seq.">
        <title>A novel divergently transcribed human histone H2A/H2B gene pair.</title>
        <authorList>
            <person name="Dobner T."/>
            <person name="Wolf I."/>
            <person name="Mai B."/>
            <person name="Lipp M."/>
        </authorList>
    </citation>
    <scope>NUCLEOTIDE SEQUENCE (H2AC17)</scope>
</reference>
<reference key="4">
    <citation type="journal article" date="1994" name="DNA Cell Biol.">
        <title>The relative expression of human histone H2A genes is similar in different types of proliferating cells.</title>
        <authorList>
            <person name="Mannironi C."/>
            <person name="Orr A."/>
            <person name="Hatch C."/>
            <person name="Pilch D."/>
            <person name="Ivanova V."/>
            <person name="Bonner W."/>
        </authorList>
    </citation>
    <scope>NUCLEOTIDE SEQUENCE (H2AC11)</scope>
</reference>
<reference key="5">
    <citation type="journal article" date="2002" name="Genomics">
        <title>The human and mouse replication-dependent histone genes.</title>
        <authorList>
            <person name="Marzluff W.F."/>
            <person name="Gongidi P."/>
            <person name="Woods K.R."/>
            <person name="Jin J."/>
            <person name="Maltais L.J."/>
        </authorList>
    </citation>
    <scope>NUCLEOTIDE SEQUENCE [GENOMIC DNA] (H2AC11; H2AC13; H2AC15; H2AC16 AND H2AC17)</scope>
</reference>
<reference key="6">
    <citation type="journal article" date="2003" name="Nature">
        <title>The DNA sequence and analysis of human chromosome 6.</title>
        <authorList>
            <person name="Mungall A.J."/>
            <person name="Palmer S.A."/>
            <person name="Sims S.K."/>
            <person name="Edwards C.A."/>
            <person name="Ashurst J.L."/>
            <person name="Wilming L."/>
            <person name="Jones M.C."/>
            <person name="Horton R."/>
            <person name="Hunt S.E."/>
            <person name="Scott C.E."/>
            <person name="Gilbert J.G.R."/>
            <person name="Clamp M.E."/>
            <person name="Bethel G."/>
            <person name="Milne S."/>
            <person name="Ainscough R."/>
            <person name="Almeida J.P."/>
            <person name="Ambrose K.D."/>
            <person name="Andrews T.D."/>
            <person name="Ashwell R.I.S."/>
            <person name="Babbage A.K."/>
            <person name="Bagguley C.L."/>
            <person name="Bailey J."/>
            <person name="Banerjee R."/>
            <person name="Barker D.J."/>
            <person name="Barlow K.F."/>
            <person name="Bates K."/>
            <person name="Beare D.M."/>
            <person name="Beasley H."/>
            <person name="Beasley O."/>
            <person name="Bird C.P."/>
            <person name="Blakey S.E."/>
            <person name="Bray-Allen S."/>
            <person name="Brook J."/>
            <person name="Brown A.J."/>
            <person name="Brown J.Y."/>
            <person name="Burford D.C."/>
            <person name="Burrill W."/>
            <person name="Burton J."/>
            <person name="Carder C."/>
            <person name="Carter N.P."/>
            <person name="Chapman J.C."/>
            <person name="Clark S.Y."/>
            <person name="Clark G."/>
            <person name="Clee C.M."/>
            <person name="Clegg S."/>
            <person name="Cobley V."/>
            <person name="Collier R.E."/>
            <person name="Collins J.E."/>
            <person name="Colman L.K."/>
            <person name="Corby N.R."/>
            <person name="Coville G.J."/>
            <person name="Culley K.M."/>
            <person name="Dhami P."/>
            <person name="Davies J."/>
            <person name="Dunn M."/>
            <person name="Earthrowl M.E."/>
            <person name="Ellington A.E."/>
            <person name="Evans K.A."/>
            <person name="Faulkner L."/>
            <person name="Francis M.D."/>
            <person name="Frankish A."/>
            <person name="Frankland J."/>
            <person name="French L."/>
            <person name="Garner P."/>
            <person name="Garnett J."/>
            <person name="Ghori M.J."/>
            <person name="Gilby L.M."/>
            <person name="Gillson C.J."/>
            <person name="Glithero R.J."/>
            <person name="Grafham D.V."/>
            <person name="Grant M."/>
            <person name="Gribble S."/>
            <person name="Griffiths C."/>
            <person name="Griffiths M.N.D."/>
            <person name="Hall R."/>
            <person name="Halls K.S."/>
            <person name="Hammond S."/>
            <person name="Harley J.L."/>
            <person name="Hart E.A."/>
            <person name="Heath P.D."/>
            <person name="Heathcott R."/>
            <person name="Holmes S.J."/>
            <person name="Howden P.J."/>
            <person name="Howe K.L."/>
            <person name="Howell G.R."/>
            <person name="Huckle E."/>
            <person name="Humphray S.J."/>
            <person name="Humphries M.D."/>
            <person name="Hunt A.R."/>
            <person name="Johnson C.M."/>
            <person name="Joy A.A."/>
            <person name="Kay M."/>
            <person name="Keenan S.J."/>
            <person name="Kimberley A.M."/>
            <person name="King A."/>
            <person name="Laird G.K."/>
            <person name="Langford C."/>
            <person name="Lawlor S."/>
            <person name="Leongamornlert D.A."/>
            <person name="Leversha M."/>
            <person name="Lloyd C.R."/>
            <person name="Lloyd D.M."/>
            <person name="Loveland J.E."/>
            <person name="Lovell J."/>
            <person name="Martin S."/>
            <person name="Mashreghi-Mohammadi M."/>
            <person name="Maslen G.L."/>
            <person name="Matthews L."/>
            <person name="McCann O.T."/>
            <person name="McLaren S.J."/>
            <person name="McLay K."/>
            <person name="McMurray A."/>
            <person name="Moore M.J.F."/>
            <person name="Mullikin J.C."/>
            <person name="Niblett D."/>
            <person name="Nickerson T."/>
            <person name="Novik K.L."/>
            <person name="Oliver K."/>
            <person name="Overton-Larty E.K."/>
            <person name="Parker A."/>
            <person name="Patel R."/>
            <person name="Pearce A.V."/>
            <person name="Peck A.I."/>
            <person name="Phillimore B.J.C.T."/>
            <person name="Phillips S."/>
            <person name="Plumb R.W."/>
            <person name="Porter K.M."/>
            <person name="Ramsey Y."/>
            <person name="Ranby S.A."/>
            <person name="Rice C.M."/>
            <person name="Ross M.T."/>
            <person name="Searle S.M."/>
            <person name="Sehra H.K."/>
            <person name="Sheridan E."/>
            <person name="Skuce C.D."/>
            <person name="Smith S."/>
            <person name="Smith M."/>
            <person name="Spraggon L."/>
            <person name="Squares S.L."/>
            <person name="Steward C.A."/>
            <person name="Sycamore N."/>
            <person name="Tamlyn-Hall G."/>
            <person name="Tester J."/>
            <person name="Theaker A.J."/>
            <person name="Thomas D.W."/>
            <person name="Thorpe A."/>
            <person name="Tracey A."/>
            <person name="Tromans A."/>
            <person name="Tubby B."/>
            <person name="Wall M."/>
            <person name="Wallis J.M."/>
            <person name="West A.P."/>
            <person name="White S.S."/>
            <person name="Whitehead S.L."/>
            <person name="Whittaker H."/>
            <person name="Wild A."/>
            <person name="Willey D.J."/>
            <person name="Wilmer T.E."/>
            <person name="Wood J.M."/>
            <person name="Wray P.W."/>
            <person name="Wyatt J.C."/>
            <person name="Young L."/>
            <person name="Younger R.M."/>
            <person name="Bentley D.R."/>
            <person name="Coulson A."/>
            <person name="Durbin R.M."/>
            <person name="Hubbard T."/>
            <person name="Sulston J.E."/>
            <person name="Dunham I."/>
            <person name="Rogers J."/>
            <person name="Beck S."/>
        </authorList>
    </citation>
    <scope>NUCLEOTIDE SEQUENCE [LARGE SCALE GENOMIC DNA] (H2AC13; H2AC15; H2AC16 AND H2AC17)</scope>
</reference>
<reference key="7">
    <citation type="journal article" date="2004" name="Genome Res.">
        <title>The status, quality, and expansion of the NIH full-length cDNA project: the Mammalian Gene Collection (MGC).</title>
        <authorList>
            <consortium name="The MGC Project Team"/>
        </authorList>
    </citation>
    <scope>NUCLEOTIDE SEQUENCE [LARGE SCALE MRNA]</scope>
    <source>
        <tissue>Colon</tissue>
        <tissue>Lymph</tissue>
    </source>
</reference>
<reference key="8">
    <citation type="journal article" date="1980" name="J. Biochem.">
        <title>Human spleen histone H2A. Isolation and four variant sequences.</title>
        <authorList>
            <person name="Hayashi T."/>
            <person name="Ohe Y."/>
            <person name="Hayashi H."/>
            <person name="Iwai K."/>
        </authorList>
    </citation>
    <scope>AMINO-ACID COMPOSITION OF TRYPTIC PEPTIDES</scope>
    <source>
        <tissue>Spleen</tissue>
    </source>
</reference>
<reference key="9">
    <citation type="journal article" date="2002" name="J. Biol. Chem.">
        <title>Global regulation of post-translational modifications on core histones.</title>
        <authorList>
            <person name="Galasinski S.C."/>
            <person name="Louie D.F."/>
            <person name="Gloor K.K."/>
            <person name="Resing K.A."/>
            <person name="Ahn N.G."/>
        </authorList>
    </citation>
    <scope>IDENTIFICATION BY MASS SPECTROMETRY</scope>
    <scope>PHOSPHORYLATION AT SER-2</scope>
    <scope>ACETYLATION AT SER-2</scope>
</reference>
<reference key="10">
    <citation type="journal article" date="2004" name="Genes Dev.">
        <title>Nucleosomal histone kinase-1 phosphorylates H2A Thr 119 during mitosis in the early Drosophila embryo.</title>
        <authorList>
            <person name="Aihara H."/>
            <person name="Nakagawa T."/>
            <person name="Yasui K."/>
            <person name="Ohta T."/>
            <person name="Hirose S."/>
            <person name="Dhomae N."/>
            <person name="Takio K."/>
            <person name="Kaneko M."/>
            <person name="Takeshima Y."/>
            <person name="Muramatsu M."/>
            <person name="Ito T."/>
        </authorList>
    </citation>
    <scope>PHOSPHORYLATION AT THR-121</scope>
</reference>
<reference key="11">
    <citation type="journal article" date="2004" name="J. Biol. Chem.">
        <title>Phosphorylation of histone H2A inhibits transcription on chromatin templates.</title>
        <authorList>
            <person name="Zhang Y."/>
            <person name="Griffin K."/>
            <person name="Mondal N."/>
            <person name="Parvin J.D."/>
        </authorList>
    </citation>
    <scope>PHOSPHORYLATION AT SER-2</scope>
    <scope>MUTAGENESIS OF SER-2</scope>
</reference>
<reference key="12">
    <citation type="journal article" date="2004" name="Nature">
        <title>Role of histone H2A ubiquitination in Polycomb silencing.</title>
        <authorList>
            <person name="Wang H."/>
            <person name="Wang L."/>
            <person name="Erdjument-Bromage H."/>
            <person name="Vidal M."/>
            <person name="Tempst P."/>
            <person name="Jones R.S."/>
            <person name="Zhang Y."/>
        </authorList>
    </citation>
    <scope>UBIQUITINATION AT LYS-120</scope>
</reference>
<reference key="13">
    <citation type="journal article" date="2005" name="Biochemistry">
        <title>Deimination of histone H2A and H4 at arginine 3 in HL-60 granulocytes.</title>
        <authorList>
            <person name="Hagiwara T."/>
            <person name="Hidaka Y."/>
            <person name="Yamada M."/>
        </authorList>
    </citation>
    <scope>ACETYLATION AT SER-2</scope>
    <scope>CITRULLINATION AT ARG-4</scope>
    <scope>IDENTIFICATION BY MASS SPECTROMETRY</scope>
</reference>
<reference key="14">
    <citation type="journal article" date="2005" name="Mol. Cell">
        <title>Role of Bmi-1 and Ring1A in H2A ubiquitylation and Hox gene silencing.</title>
        <authorList>
            <person name="Cao R."/>
            <person name="Tsukada Y."/>
            <person name="Zhang Y."/>
        </authorList>
    </citation>
    <scope>UBIQUITINATION AT LYS-120</scope>
</reference>
<reference key="15">
    <citation type="journal article" date="2006" name="Genes Dev.">
        <title>DNA damage triggers nucleotide excision repair-dependent monoubiquitylation of histone H2A.</title>
        <authorList>
            <person name="Bergink S."/>
            <person name="Salomons F.A."/>
            <person name="Hoogstraten D."/>
            <person name="Groothuis T.A.M."/>
            <person name="de Waard H."/>
            <person name="Wu J."/>
            <person name="Yuan L."/>
            <person name="Citterio E."/>
            <person name="Houtsmuller A.B."/>
            <person name="Neefjes J."/>
            <person name="Hoeijmakers J.H.J."/>
            <person name="Vermeulen W."/>
            <person name="Dantuma N.P."/>
        </authorList>
    </citation>
    <scope>UBIQUITINATION AT LYS-120</scope>
</reference>
<reference key="16">
    <citation type="journal article" date="2006" name="J. Proteome Res.">
        <title>Precise characterization of human histones in the H2A gene family by top down mass spectrometry.</title>
        <authorList>
            <person name="Boyne M.T. II"/>
            <person name="Pesavento J.J."/>
            <person name="Mizzen C.A."/>
            <person name="Kelleher N.L."/>
        </authorList>
    </citation>
    <scope>MASS SPECTROMETRY</scope>
    <scope>ACETYLATION AT SER-2</scope>
</reference>
<reference key="17">
    <citation type="journal article" date="2007" name="Cell">
        <title>RNF8 ubiquitylates histones at DNA double-strand breaks and promotes assembly of repair proteins.</title>
        <authorList>
            <person name="Mailand N."/>
            <person name="Bekker-Jensen S."/>
            <person name="Faustrup H."/>
            <person name="Melander F."/>
            <person name="Bartek J."/>
            <person name="Lukas C."/>
            <person name="Lukas J."/>
        </authorList>
    </citation>
    <scope>UBIQUITINATION</scope>
</reference>
<reference key="18">
    <citation type="journal article" date="2007" name="Cell">
        <title>RNF8 transduces the DNA-damage signal via histone ubiquitylation and checkpoint protein assembly.</title>
        <authorList>
            <person name="Huen M.S.Y."/>
            <person name="Grant R."/>
            <person name="Manke I."/>
            <person name="Minn K."/>
            <person name="Yu X."/>
            <person name="Yaffe M.B."/>
            <person name="Chen J."/>
        </authorList>
    </citation>
    <scope>UBIQUITINATION</scope>
</reference>
<reference key="19">
    <citation type="journal article" date="2009" name="Cell">
        <title>The RIDDLE syndrome protein mediates a ubiquitin-dependent signaling cascade at sites of DNA damage.</title>
        <authorList>
            <person name="Stewart G.S."/>
            <person name="Panier S."/>
            <person name="Townsend K."/>
            <person name="Al-Hakim A.K."/>
            <person name="Kolas N.K."/>
            <person name="Miller E.S."/>
            <person name="Nakada S."/>
            <person name="Ylanko J."/>
            <person name="Olivarius S."/>
            <person name="Mendez M."/>
            <person name="Oldreive C."/>
            <person name="Wildenhain J."/>
            <person name="Tagliaferro A."/>
            <person name="Pelletier L."/>
            <person name="Taubenheim N."/>
            <person name="Durandy A."/>
            <person name="Byrd P.J."/>
            <person name="Stankovic T."/>
            <person name="Taylor A.M.R."/>
            <person name="Durocher D."/>
        </authorList>
    </citation>
    <scope>UBIQUITINATION</scope>
</reference>
<reference key="20">
    <citation type="journal article" date="2009" name="Cell">
        <title>RNF168 binds and amplifies ubiquitin conjugates on damaged chromosomes to allow accumulation of repair proteins.</title>
        <authorList>
            <person name="Doil C."/>
            <person name="Mailand N."/>
            <person name="Bekker-Jensen S."/>
            <person name="Menard P."/>
            <person name="Larsen D.H."/>
            <person name="Pepperkok R."/>
            <person name="Ellenberg J."/>
            <person name="Panier S."/>
            <person name="Durocher D."/>
            <person name="Bartek J."/>
            <person name="Lukas J."/>
            <person name="Lukas C."/>
        </authorList>
    </citation>
    <scope>UBIQUITINATION</scope>
</reference>
<reference key="21">
    <citation type="journal article" date="2011" name="Cell">
        <title>Identification of 67 histone marks and histone lysine crotonylation as a new type of histone modification.</title>
        <authorList>
            <person name="Tan M."/>
            <person name="Luo H."/>
            <person name="Lee S."/>
            <person name="Jin F."/>
            <person name="Yang J.S."/>
            <person name="Montellier E."/>
            <person name="Buchou T."/>
            <person name="Cheng Z."/>
            <person name="Rousseaux S."/>
            <person name="Rajagopal N."/>
            <person name="Lu Z."/>
            <person name="Ye Z."/>
            <person name="Zhu Q."/>
            <person name="Wysocka J."/>
            <person name="Ye Y."/>
            <person name="Khochbin S."/>
            <person name="Ren B."/>
            <person name="Zhao Y."/>
        </authorList>
    </citation>
    <scope>CROTONYLATION AT LYS-37; LYS-119; LYS-120 AND LYS-126</scope>
</reference>
<reference key="22">
    <citation type="journal article" date="2012" name="Cell">
        <title>RNF168 ubiquitinates K13-15 on H2A/H2AX to drive DNA Damage signaling.</title>
        <authorList>
            <person name="Mattiroli F."/>
            <person name="Vissers J.H."/>
            <person name="van Dijk W.J."/>
            <person name="Ikpa P."/>
            <person name="Citterio E."/>
            <person name="Vermeulen W."/>
            <person name="Marteijn J.A."/>
            <person name="Sixma T.K."/>
        </authorList>
    </citation>
    <scope>UBIQUITINATION AT LYS-14 AND LYS-16 BY RNF168</scope>
</reference>
<reference key="23">
    <citation type="journal article" date="2012" name="Cell Cycle">
        <title>A novel ubiquitin mark at the N-terminal tail of histone H2As targeted by RNF168 ubiquitin ligase.</title>
        <authorList>
            <person name="Gatti M."/>
            <person name="Pinato S."/>
            <person name="Maspero E."/>
            <person name="Soffientini P."/>
            <person name="Polo S."/>
            <person name="Penengo L."/>
        </authorList>
    </citation>
    <scope>UBIQUITINATION AT LYS-14 AND LYS-16 BY RNF168</scope>
</reference>
<reference key="24">
    <citation type="journal article" date="2012" name="Mol. Cell. Proteomics">
        <title>Lysine succinylation and lysine malonylation in histones.</title>
        <authorList>
            <person name="Xie Z."/>
            <person name="Dai J."/>
            <person name="Dai L."/>
            <person name="Tan M."/>
            <person name="Cheng Z."/>
            <person name="Wu Y."/>
            <person name="Boeke J.D."/>
            <person name="Zhao Y."/>
        </authorList>
    </citation>
    <scope>SUCCINYLATION AT LYS-10 AND LYS-96</scope>
</reference>
<reference key="25">
    <citation type="journal article" date="2013" name="Mol. Cell">
        <title>VprBP has intrinsic kinase activity targeting histone H2A and represses gene transcription.</title>
        <authorList>
            <person name="Kim K."/>
            <person name="Kim J.M."/>
            <person name="Kim J.S."/>
            <person name="Choi J."/>
            <person name="Lee Y.S."/>
            <person name="Neamati N."/>
            <person name="Song J.S."/>
            <person name="Heo K."/>
            <person name="An W."/>
        </authorList>
    </citation>
    <scope>PHOSPHORYLATION AT THR-121</scope>
</reference>
<reference key="26">
    <citation type="journal article" date="2014" name="Nat. Chem. Biol.">
        <title>Lysine 2-hydroxyisobutyrylation is a widely distributed active histone mark.</title>
        <authorList>
            <person name="Dai L."/>
            <person name="Peng C."/>
            <person name="Montellier E."/>
            <person name="Lu Z."/>
            <person name="Chen Y."/>
            <person name="Ishii H."/>
            <person name="Debernardi A."/>
            <person name="Buchou T."/>
            <person name="Rousseaux S."/>
            <person name="Jin F."/>
            <person name="Sabari B.R."/>
            <person name="Deng Z."/>
            <person name="Allis C.D."/>
            <person name="Ren B."/>
            <person name="Khochbin S."/>
            <person name="Zhao Y."/>
        </authorList>
    </citation>
    <scope>HYDROXYBUTYRYLATION AT LYS-6; LYS-10; LYS-37; LYS-75; LYS-76; LYS-96 AND LYS-119</scope>
</reference>
<reference key="27">
    <citation type="journal article" date="2014" name="Nature">
        <title>Glutamine methylation in histone H2A is an RNA-polymerase-I-dedicated modification.</title>
        <authorList>
            <person name="Tessarz P."/>
            <person name="Santos-Rosa H."/>
            <person name="Robson S.C."/>
            <person name="Sylvestersen K.B."/>
            <person name="Nelson C.J."/>
            <person name="Nielsen M.L."/>
            <person name="Kouzarides T."/>
        </authorList>
    </citation>
    <scope>METHYLATION AT GLN-105</scope>
</reference>
<reference key="28">
    <citation type="journal article" date="2014" name="Nature">
        <title>TRIM37 is a new histone H2A ubiquitin ligase and breast cancer oncoprotein.</title>
        <authorList>
            <person name="Bhatnagar S."/>
            <person name="Gazin C."/>
            <person name="Chamberlain L."/>
            <person name="Ou J."/>
            <person name="Zhu X."/>
            <person name="Tushir J.S."/>
            <person name="Virbasius C.M."/>
            <person name="Lin L."/>
            <person name="Zhu L.J."/>
            <person name="Wajapeyee N."/>
            <person name="Green M.R."/>
        </authorList>
    </citation>
    <scope>UBIQUITINATION AT LYS-120</scope>
</reference>
<reference key="29">
    <citation type="journal article" date="2016" name="Genes Dev.">
        <title>USP51 deubiquitylates H2AK13,15ub and regulates DNA damage response.</title>
        <authorList>
            <person name="Wang Z."/>
            <person name="Zhang H."/>
            <person name="Liu J."/>
            <person name="Cheruiyot A."/>
            <person name="Lee J.H."/>
            <person name="Ordog T."/>
            <person name="Lou Z."/>
            <person name="You Z."/>
            <person name="Zhang Z."/>
        </authorList>
    </citation>
    <scope>DEUBIQUITINATION AT LYS-14 AND LYS-16 BY USP51</scope>
</reference>
<reference key="30">
    <citation type="journal article" date="2016" name="Mol. Cell">
        <title>Metabolic regulation of gene expression by histone lysine beta-hydroxybutyrylation.</title>
        <authorList>
            <person name="Xie Z."/>
            <person name="Zhang D."/>
            <person name="Chung D."/>
            <person name="Tang Z."/>
            <person name="Huang H."/>
            <person name="Dai L."/>
            <person name="Qi S."/>
            <person name="Li J."/>
            <person name="Colak G."/>
            <person name="Chen Y."/>
            <person name="Xia C."/>
            <person name="Peng C."/>
            <person name="Ruan H."/>
            <person name="Kirkey M."/>
            <person name="Wang D."/>
            <person name="Jensen L.M."/>
            <person name="Kwon O.K."/>
            <person name="Lee S."/>
            <person name="Pletcher S.D."/>
            <person name="Tan M."/>
            <person name="Lombard D.B."/>
            <person name="White K.P."/>
            <person name="Zhao H."/>
            <person name="Li J."/>
            <person name="Roeder R.G."/>
            <person name="Yang X."/>
            <person name="Zhao Y."/>
        </authorList>
    </citation>
    <scope>HYDROXYBUTYRYLATION AT LYS-10; LYS-14; LYS-37; LYS-96 AND LYS-119</scope>
</reference>
<reference key="31">
    <citation type="journal article" date="2019" name="Mol. Cell">
        <title>Glutarylation of histone H4 lysine 91 regulates chromatin dynamics.</title>
        <authorList>
            <person name="Bao X."/>
            <person name="Liu Z."/>
            <person name="Zhang W."/>
            <person name="Gladysz K."/>
            <person name="Fung Y.M.E."/>
            <person name="Tian G."/>
            <person name="Xiong Y."/>
            <person name="Wong J.W.H."/>
            <person name="Yuen K.W.Y."/>
            <person name="Li X.D."/>
        </authorList>
    </citation>
    <scope>GLUTARYLATION AT LYS-96; LYS-100; LYS-119; LYS-120 AND LYS-126</scope>
</reference>
<reference evidence="35 36 37" key="32">
    <citation type="journal article" date="2020" name="Nature">
        <title>The molecular basis of tight nuclear tethering and inactivation of cGAS.</title>
        <authorList>
            <person name="Zhao B."/>
            <person name="Xu P."/>
            <person name="Rowlett C.M."/>
            <person name="Jing T."/>
            <person name="Shinde O."/>
            <person name="Lei Y."/>
            <person name="West A.P."/>
            <person name="Liu W.R."/>
            <person name="Li P."/>
        </authorList>
    </citation>
    <scope>STRUCTURE BY ELECTRON MICROSCOPY (2.98 ANGSTROMS) OF 2-130 IN COMPLEX WITH NUCLEOSOME CORE AND CGAS</scope>
</reference>
<reference evidence="38 39" key="33">
    <citation type="journal article" date="2020" name="Science">
        <title>Structural basis of nucleosome-dependent cGAS inhibition.</title>
        <authorList>
            <person name="Boyer J.A."/>
            <person name="Spangler C.J."/>
            <person name="Strauss J.D."/>
            <person name="Cesmat A.P."/>
            <person name="Liu P."/>
            <person name="McGinty R.K."/>
            <person name="Zhang Q."/>
        </authorList>
    </citation>
    <scope>STRUCTURE BY ELECTRON MICROSCOPY (3.30 ANGSTROMS) OF 2-130 IN COMPLEX WITH NUCLEOSOME CORE AND CGAS</scope>
</reference>
<reference evidence="40" key="34">
    <citation type="journal article" date="2022" name="Nucleic Acids Res.">
        <title>Multivalent DNA and nucleosome acidic patch interactions specify VRK1 mitotic localization and activity.</title>
        <authorList>
            <person name="Budziszewski G.R."/>
            <person name="Zhao Y."/>
            <person name="Spangler C.J."/>
            <person name="Kedziora K.M."/>
            <person name="Williams M.R."/>
            <person name="Azzam D.N."/>
            <person name="Skrajna A."/>
            <person name="Koyama Y."/>
            <person name="Cesmat A.P."/>
            <person name="Simmons H.C."/>
            <person name="Arteaga E.C."/>
            <person name="Strauss J.D."/>
            <person name="Kireev D."/>
            <person name="McGinty R.K."/>
        </authorList>
    </citation>
    <scope>STRUCTURE BY ELECTRON MICROSCOPY (3.00 ANGSTROMS) OF 2-130 IN COMPLEX WITH NUCLEOSOME CORE AND VRK1</scope>
    <scope>INTERACTION WITH VRK1</scope>
    <scope>MUTAGENESIS OF GLU-57; GLU-62; GLU-65; ASP-73; ASN-90; ASP-91; GLU-92 AND GLU-93</scope>
</reference>